<evidence type="ECO:0000255" key="1">
    <source>
        <dbReference type="HAMAP-Rule" id="MF_01043"/>
    </source>
</evidence>
<comment type="function">
    <text evidence="1">Catalyzes the transfer of an acyl group from acyl-ACP to glycerol-3-phosphate (G3P) to form lysophosphatidic acid (LPA). This enzyme can also utilize acyl-CoA as fatty acyl donor, but not acyl-PO(4).</text>
</comment>
<comment type="catalytic activity">
    <reaction evidence="1">
        <text>sn-glycerol 3-phosphate + an acyl-CoA = a 1-acyl-sn-glycero-3-phosphate + CoA</text>
        <dbReference type="Rhea" id="RHEA:15325"/>
        <dbReference type="ChEBI" id="CHEBI:57287"/>
        <dbReference type="ChEBI" id="CHEBI:57597"/>
        <dbReference type="ChEBI" id="CHEBI:57970"/>
        <dbReference type="ChEBI" id="CHEBI:58342"/>
        <dbReference type="EC" id="2.3.1.15"/>
    </reaction>
</comment>
<comment type="catalytic activity">
    <reaction evidence="1">
        <text>a fatty acyl-[ACP] + sn-glycerol 3-phosphate = a 1-acyl-sn-glycero-3-phosphate + holo-[ACP]</text>
        <dbReference type="Rhea" id="RHEA:42300"/>
        <dbReference type="Rhea" id="RHEA-COMP:9685"/>
        <dbReference type="Rhea" id="RHEA-COMP:14125"/>
        <dbReference type="ChEBI" id="CHEBI:57597"/>
        <dbReference type="ChEBI" id="CHEBI:57970"/>
        <dbReference type="ChEBI" id="CHEBI:64479"/>
        <dbReference type="ChEBI" id="CHEBI:138651"/>
        <dbReference type="EC" id="2.3.1.n5"/>
    </reaction>
</comment>
<comment type="pathway">
    <text evidence="1">Lipid metabolism; phospholipid metabolism.</text>
</comment>
<comment type="subunit">
    <text evidence="1">Probably interacts with PlsX.</text>
</comment>
<comment type="subcellular location">
    <subcellularLocation>
        <location evidence="1">Cell inner membrane</location>
        <topology evidence="1">Multi-pass membrane protein</topology>
    </subcellularLocation>
</comment>
<comment type="similarity">
    <text evidence="1">Belongs to the PlsY family.</text>
</comment>
<dbReference type="EC" id="2.3.1.15" evidence="1"/>
<dbReference type="EC" id="2.3.1.n5" evidence="1"/>
<dbReference type="EMBL" id="AP009240">
    <property type="protein sequence ID" value="BAG78863.1"/>
    <property type="molecule type" value="Genomic_DNA"/>
</dbReference>
<dbReference type="RefSeq" id="WP_001272796.1">
    <property type="nucleotide sequence ID" value="NC_011415.1"/>
</dbReference>
<dbReference type="SMR" id="B6I430"/>
<dbReference type="GeneID" id="93778934"/>
<dbReference type="KEGG" id="ecy:ECSE_3339"/>
<dbReference type="HOGENOM" id="CLU_081254_0_2_6"/>
<dbReference type="UniPathway" id="UPA00085"/>
<dbReference type="Proteomes" id="UP000008199">
    <property type="component" value="Chromosome"/>
</dbReference>
<dbReference type="GO" id="GO:0005886">
    <property type="term" value="C:plasma membrane"/>
    <property type="evidence" value="ECO:0007669"/>
    <property type="project" value="UniProtKB-SubCell"/>
</dbReference>
<dbReference type="GO" id="GO:0043772">
    <property type="term" value="F:acyl-phosphate glycerol-3-phosphate acyltransferase activity"/>
    <property type="evidence" value="ECO:0007669"/>
    <property type="project" value="InterPro"/>
</dbReference>
<dbReference type="GO" id="GO:0004366">
    <property type="term" value="F:glycerol-3-phosphate O-acyltransferase activity"/>
    <property type="evidence" value="ECO:0007669"/>
    <property type="project" value="UniProtKB-UniRule"/>
</dbReference>
<dbReference type="GO" id="GO:0008654">
    <property type="term" value="P:phospholipid biosynthetic process"/>
    <property type="evidence" value="ECO:0007669"/>
    <property type="project" value="UniProtKB-UniRule"/>
</dbReference>
<dbReference type="HAMAP" id="MF_01043">
    <property type="entry name" value="PlsY"/>
    <property type="match status" value="1"/>
</dbReference>
<dbReference type="InterPro" id="IPR003811">
    <property type="entry name" value="G3P_acylTferase_PlsY"/>
</dbReference>
<dbReference type="NCBIfam" id="TIGR00023">
    <property type="entry name" value="glycerol-3-phosphate 1-O-acyltransferase PlsY"/>
    <property type="match status" value="1"/>
</dbReference>
<dbReference type="PANTHER" id="PTHR30309:SF0">
    <property type="entry name" value="GLYCEROL-3-PHOSPHATE ACYLTRANSFERASE-RELATED"/>
    <property type="match status" value="1"/>
</dbReference>
<dbReference type="PANTHER" id="PTHR30309">
    <property type="entry name" value="INNER MEMBRANE PROTEIN YGIH"/>
    <property type="match status" value="1"/>
</dbReference>
<dbReference type="Pfam" id="PF02660">
    <property type="entry name" value="G3P_acyltransf"/>
    <property type="match status" value="1"/>
</dbReference>
<dbReference type="SMART" id="SM01207">
    <property type="entry name" value="G3P_acyltransf"/>
    <property type="match status" value="1"/>
</dbReference>
<accession>B6I430</accession>
<sequence>MSAIAPGMILIAYLCGSISSAILVCRLCGLPDPRTSGSGNPGATNVLRIGGKGAAVAVLIFDVLKGMLPVWGAYELGVSPFWLGLIAIAACLGHIWPVFFGFKGGKGVATAFGAIAPIGWDLTGVMAGTWLLTVLLSGYSSLGAIVSALIAPFYVWWFKPQFTFPVSMLSCLILLRHHDNIQRLWRRQETKIWTKFKRKREKDPE</sequence>
<reference key="1">
    <citation type="journal article" date="2008" name="DNA Res.">
        <title>Complete genome sequence and comparative analysis of the wild-type commensal Escherichia coli strain SE11 isolated from a healthy adult.</title>
        <authorList>
            <person name="Oshima K."/>
            <person name="Toh H."/>
            <person name="Ogura Y."/>
            <person name="Sasamoto H."/>
            <person name="Morita H."/>
            <person name="Park S.-H."/>
            <person name="Ooka T."/>
            <person name="Iyoda S."/>
            <person name="Taylor T.D."/>
            <person name="Hayashi T."/>
            <person name="Itoh K."/>
            <person name="Hattori M."/>
        </authorList>
    </citation>
    <scope>NUCLEOTIDE SEQUENCE [LARGE SCALE GENOMIC DNA]</scope>
    <source>
        <strain>SE11</strain>
    </source>
</reference>
<gene>
    <name evidence="1" type="primary">plsY</name>
    <name type="synonym">ygiH</name>
    <name type="ordered locus">ECSE_3339</name>
</gene>
<keyword id="KW-0997">Cell inner membrane</keyword>
<keyword id="KW-1003">Cell membrane</keyword>
<keyword id="KW-0444">Lipid biosynthesis</keyword>
<keyword id="KW-0443">Lipid metabolism</keyword>
<keyword id="KW-0472">Membrane</keyword>
<keyword id="KW-0594">Phospholipid biosynthesis</keyword>
<keyword id="KW-1208">Phospholipid metabolism</keyword>
<keyword id="KW-0808">Transferase</keyword>
<keyword id="KW-0812">Transmembrane</keyword>
<keyword id="KW-1133">Transmembrane helix</keyword>
<feature type="chain" id="PRO_1000136087" description="Glycerol-3-phosphate acyltransferase">
    <location>
        <begin position="1"/>
        <end position="205"/>
    </location>
</feature>
<feature type="topological domain" description="Periplasmic" evidence="1">
    <location>
        <begin position="1"/>
        <end position="3"/>
    </location>
</feature>
<feature type="transmembrane region" description="Helical" evidence="1">
    <location>
        <begin position="4"/>
        <end position="24"/>
    </location>
</feature>
<feature type="topological domain" description="Cytoplasmic" evidence="1">
    <location>
        <begin position="25"/>
        <end position="52"/>
    </location>
</feature>
<feature type="transmembrane region" description="Helical" evidence="1">
    <location>
        <begin position="53"/>
        <end position="73"/>
    </location>
</feature>
<feature type="topological domain" description="Periplasmic" evidence="1">
    <location>
        <begin position="74"/>
        <end position="80"/>
    </location>
</feature>
<feature type="transmembrane region" description="Helical" evidence="1">
    <location>
        <begin position="81"/>
        <end position="101"/>
    </location>
</feature>
<feature type="topological domain" description="Cytoplasmic" evidence="1">
    <location>
        <begin position="102"/>
        <end position="111"/>
    </location>
</feature>
<feature type="transmembrane region" description="Helical" evidence="1">
    <location>
        <begin position="112"/>
        <end position="132"/>
    </location>
</feature>
<feature type="topological domain" description="Periplasmic" evidence="1">
    <location>
        <begin position="133"/>
        <end position="137"/>
    </location>
</feature>
<feature type="transmembrane region" description="Helical" evidence="1">
    <location>
        <begin position="138"/>
        <end position="158"/>
    </location>
</feature>
<feature type="topological domain" description="Cytoplasmic" evidence="1">
    <location>
        <begin position="159"/>
        <end position="205"/>
    </location>
</feature>
<name>PLSY_ECOSE</name>
<proteinExistence type="inferred from homology"/>
<organism>
    <name type="scientific">Escherichia coli (strain SE11)</name>
    <dbReference type="NCBI Taxonomy" id="409438"/>
    <lineage>
        <taxon>Bacteria</taxon>
        <taxon>Pseudomonadati</taxon>
        <taxon>Pseudomonadota</taxon>
        <taxon>Gammaproteobacteria</taxon>
        <taxon>Enterobacterales</taxon>
        <taxon>Enterobacteriaceae</taxon>
        <taxon>Escherichia</taxon>
    </lineage>
</organism>
<protein>
    <recommendedName>
        <fullName evidence="1">Glycerol-3-phosphate acyltransferase</fullName>
    </recommendedName>
    <alternativeName>
        <fullName evidence="1">G3P acyltransferase</fullName>
        <shortName evidence="1">GPAT</shortName>
        <ecNumber evidence="1">2.3.1.15</ecNumber>
        <ecNumber evidence="1">2.3.1.n5</ecNumber>
    </alternativeName>
    <alternativeName>
        <fullName evidence="1">Lysophosphatidic acid synthase</fullName>
        <shortName evidence="1">LPA synthase</shortName>
    </alternativeName>
</protein>